<dbReference type="EC" id="3.1.3.48"/>
<dbReference type="EMBL" id="AAFI02000008">
    <property type="protein sequence ID" value="EAL70968.2"/>
    <property type="molecule type" value="Genomic_DNA"/>
</dbReference>
<dbReference type="RefSeq" id="XP_644995.2">
    <property type="nucleotide sequence ID" value="XM_639903.2"/>
</dbReference>
<dbReference type="SMR" id="Q86IL4"/>
<dbReference type="FunCoup" id="Q86IL4">
    <property type="interactions" value="2"/>
</dbReference>
<dbReference type="STRING" id="44689.Q86IL4"/>
<dbReference type="PaxDb" id="44689-DDB0266465"/>
<dbReference type="EnsemblProtists" id="EAL70968">
    <property type="protein sequence ID" value="EAL70968"/>
    <property type="gene ID" value="DDB_G0272662"/>
</dbReference>
<dbReference type="GeneID" id="8618672"/>
<dbReference type="KEGG" id="ddi:DDB_G0272662"/>
<dbReference type="dictyBase" id="DDB_G0272662"/>
<dbReference type="VEuPathDB" id="AmoebaDB:DDB_G0272662"/>
<dbReference type="eggNOG" id="KOG2836">
    <property type="taxonomic scope" value="Eukaryota"/>
</dbReference>
<dbReference type="HOGENOM" id="CLU_099263_2_0_1"/>
<dbReference type="InParanoid" id="Q86IL4"/>
<dbReference type="OMA" id="CVIDEWL"/>
<dbReference type="PhylomeDB" id="Q86IL4"/>
<dbReference type="Reactome" id="R-DDI-8873719">
    <property type="pathway name" value="RAB geranylgeranylation"/>
</dbReference>
<dbReference type="PRO" id="PR:Q86IL4"/>
<dbReference type="Proteomes" id="UP000002195">
    <property type="component" value="Chromosome 2"/>
</dbReference>
<dbReference type="GO" id="GO:0005737">
    <property type="term" value="C:cytoplasm"/>
    <property type="evidence" value="ECO:0000318"/>
    <property type="project" value="GO_Central"/>
</dbReference>
<dbReference type="GO" id="GO:0016020">
    <property type="term" value="C:membrane"/>
    <property type="evidence" value="ECO:0007669"/>
    <property type="project" value="UniProtKB-SubCell"/>
</dbReference>
<dbReference type="GO" id="GO:0005634">
    <property type="term" value="C:nucleus"/>
    <property type="evidence" value="ECO:0000318"/>
    <property type="project" value="GO_Central"/>
</dbReference>
<dbReference type="GO" id="GO:0004725">
    <property type="term" value="F:protein tyrosine phosphatase activity"/>
    <property type="evidence" value="ECO:0000318"/>
    <property type="project" value="GO_Central"/>
</dbReference>
<dbReference type="CDD" id="cd14500">
    <property type="entry name" value="PTP-IVa"/>
    <property type="match status" value="1"/>
</dbReference>
<dbReference type="FunFam" id="3.90.190.10:FF:000318">
    <property type="entry name" value="Probable protein tyrosine phosphatase type IVA B"/>
    <property type="match status" value="1"/>
</dbReference>
<dbReference type="Gene3D" id="3.90.190.10">
    <property type="entry name" value="Protein tyrosine phosphatase superfamily"/>
    <property type="match status" value="1"/>
</dbReference>
<dbReference type="InterPro" id="IPR000340">
    <property type="entry name" value="Dual-sp_phosphatase_cat-dom"/>
</dbReference>
<dbReference type="InterPro" id="IPR029021">
    <property type="entry name" value="Prot-tyrosine_phosphatase-like"/>
</dbReference>
<dbReference type="InterPro" id="IPR050561">
    <property type="entry name" value="PTP"/>
</dbReference>
<dbReference type="InterPro" id="IPR016130">
    <property type="entry name" value="Tyr_Pase_AS"/>
</dbReference>
<dbReference type="InterPro" id="IPR003595">
    <property type="entry name" value="Tyr_Pase_cat"/>
</dbReference>
<dbReference type="InterPro" id="IPR000387">
    <property type="entry name" value="Tyr_Pase_dom"/>
</dbReference>
<dbReference type="InterPro" id="IPR020422">
    <property type="entry name" value="TYR_PHOSPHATASE_DUAL_dom"/>
</dbReference>
<dbReference type="PANTHER" id="PTHR23339">
    <property type="entry name" value="TYROSINE SPECIFIC PROTEIN PHOSPHATASE AND DUAL SPECIFICITY PROTEIN PHOSPHATASE"/>
    <property type="match status" value="1"/>
</dbReference>
<dbReference type="Pfam" id="PF00782">
    <property type="entry name" value="DSPc"/>
    <property type="match status" value="1"/>
</dbReference>
<dbReference type="SMART" id="SM00404">
    <property type="entry name" value="PTPc_motif"/>
    <property type="match status" value="1"/>
</dbReference>
<dbReference type="SUPFAM" id="SSF52799">
    <property type="entry name" value="(Phosphotyrosine protein) phosphatases II"/>
    <property type="match status" value="1"/>
</dbReference>
<dbReference type="PROSITE" id="PS00383">
    <property type="entry name" value="TYR_PHOSPHATASE_1"/>
    <property type="match status" value="1"/>
</dbReference>
<dbReference type="PROSITE" id="PS50056">
    <property type="entry name" value="TYR_PHOSPHATASE_2"/>
    <property type="match status" value="1"/>
</dbReference>
<dbReference type="PROSITE" id="PS50054">
    <property type="entry name" value="TYR_PHOSPHATASE_DUAL"/>
    <property type="match status" value="1"/>
</dbReference>
<proteinExistence type="inferred from homology"/>
<evidence type="ECO:0000250" key="1"/>
<evidence type="ECO:0000255" key="2">
    <source>
        <dbReference type="PROSITE-ProRule" id="PRU00160"/>
    </source>
</evidence>
<evidence type="ECO:0000255" key="3">
    <source>
        <dbReference type="PROSITE-ProRule" id="PRU10044"/>
    </source>
</evidence>
<evidence type="ECO:0000305" key="4"/>
<reference key="1">
    <citation type="journal article" date="2002" name="Nature">
        <title>Sequence and analysis of chromosome 2 of Dictyostelium discoideum.</title>
        <authorList>
            <person name="Gloeckner G."/>
            <person name="Eichinger L."/>
            <person name="Szafranski K."/>
            <person name="Pachebat J.A."/>
            <person name="Bankier A.T."/>
            <person name="Dear P.H."/>
            <person name="Lehmann R."/>
            <person name="Baumgart C."/>
            <person name="Parra G."/>
            <person name="Abril J.F."/>
            <person name="Guigo R."/>
            <person name="Kumpf K."/>
            <person name="Tunggal B."/>
            <person name="Cox E.C."/>
            <person name="Quail M.A."/>
            <person name="Platzer M."/>
            <person name="Rosenthal A."/>
            <person name="Noegel A.A."/>
        </authorList>
    </citation>
    <scope>NUCLEOTIDE SEQUENCE [LARGE SCALE GENOMIC DNA]</scope>
    <source>
        <strain>AX4</strain>
    </source>
</reference>
<reference key="2">
    <citation type="journal article" date="2005" name="Nature">
        <title>The genome of the social amoeba Dictyostelium discoideum.</title>
        <authorList>
            <person name="Eichinger L."/>
            <person name="Pachebat J.A."/>
            <person name="Gloeckner G."/>
            <person name="Rajandream M.A."/>
            <person name="Sucgang R."/>
            <person name="Berriman M."/>
            <person name="Song J."/>
            <person name="Olsen R."/>
            <person name="Szafranski K."/>
            <person name="Xu Q."/>
            <person name="Tunggal B."/>
            <person name="Kummerfeld S."/>
            <person name="Madera M."/>
            <person name="Konfortov B.A."/>
            <person name="Rivero F."/>
            <person name="Bankier A.T."/>
            <person name="Lehmann R."/>
            <person name="Hamlin N."/>
            <person name="Davies R."/>
            <person name="Gaudet P."/>
            <person name="Fey P."/>
            <person name="Pilcher K."/>
            <person name="Chen G."/>
            <person name="Saunders D."/>
            <person name="Sodergren E.J."/>
            <person name="Davis P."/>
            <person name="Kerhornou A."/>
            <person name="Nie X."/>
            <person name="Hall N."/>
            <person name="Anjard C."/>
            <person name="Hemphill L."/>
            <person name="Bason N."/>
            <person name="Farbrother P."/>
            <person name="Desany B."/>
            <person name="Just E."/>
            <person name="Morio T."/>
            <person name="Rost R."/>
            <person name="Churcher C.M."/>
            <person name="Cooper J."/>
            <person name="Haydock S."/>
            <person name="van Driessche N."/>
            <person name="Cronin A."/>
            <person name="Goodhead I."/>
            <person name="Muzny D.M."/>
            <person name="Mourier T."/>
            <person name="Pain A."/>
            <person name="Lu M."/>
            <person name="Harper D."/>
            <person name="Lindsay R."/>
            <person name="Hauser H."/>
            <person name="James K.D."/>
            <person name="Quiles M."/>
            <person name="Madan Babu M."/>
            <person name="Saito T."/>
            <person name="Buchrieser C."/>
            <person name="Wardroper A."/>
            <person name="Felder M."/>
            <person name="Thangavelu M."/>
            <person name="Johnson D."/>
            <person name="Knights A."/>
            <person name="Loulseged H."/>
            <person name="Mungall K.L."/>
            <person name="Oliver K."/>
            <person name="Price C."/>
            <person name="Quail M.A."/>
            <person name="Urushihara H."/>
            <person name="Hernandez J."/>
            <person name="Rabbinowitsch E."/>
            <person name="Steffen D."/>
            <person name="Sanders M."/>
            <person name="Ma J."/>
            <person name="Kohara Y."/>
            <person name="Sharp S."/>
            <person name="Simmonds M.N."/>
            <person name="Spiegler S."/>
            <person name="Tivey A."/>
            <person name="Sugano S."/>
            <person name="White B."/>
            <person name="Walker D."/>
            <person name="Woodward J.R."/>
            <person name="Winckler T."/>
            <person name="Tanaka Y."/>
            <person name="Shaulsky G."/>
            <person name="Schleicher M."/>
            <person name="Weinstock G.M."/>
            <person name="Rosenthal A."/>
            <person name="Cox E.C."/>
            <person name="Chisholm R.L."/>
            <person name="Gibbs R.A."/>
            <person name="Loomis W.F."/>
            <person name="Platzer M."/>
            <person name="Kay R.R."/>
            <person name="Williams J.G."/>
            <person name="Dear P.H."/>
            <person name="Noegel A.A."/>
            <person name="Barrell B.G."/>
            <person name="Kuspa A."/>
        </authorList>
    </citation>
    <scope>NUCLEOTIDE SEQUENCE [LARGE SCALE GENOMIC DNA]</scope>
    <source>
        <strain>AX4</strain>
    </source>
</reference>
<gene>
    <name type="ORF">DDB_G0272662</name>
</gene>
<comment type="catalytic activity">
    <reaction evidence="3">
        <text>O-phospho-L-tyrosyl-[protein] + H2O = L-tyrosyl-[protein] + phosphate</text>
        <dbReference type="Rhea" id="RHEA:10684"/>
        <dbReference type="Rhea" id="RHEA-COMP:10136"/>
        <dbReference type="Rhea" id="RHEA-COMP:20101"/>
        <dbReference type="ChEBI" id="CHEBI:15377"/>
        <dbReference type="ChEBI" id="CHEBI:43474"/>
        <dbReference type="ChEBI" id="CHEBI:46858"/>
        <dbReference type="ChEBI" id="CHEBI:61978"/>
        <dbReference type="EC" id="3.1.3.48"/>
    </reaction>
</comment>
<comment type="subcellular location">
    <subcellularLocation>
        <location evidence="4">Membrane</location>
        <topology evidence="4">Lipid-anchor</topology>
    </subcellularLocation>
</comment>
<comment type="similarity">
    <text evidence="4">Belongs to the protein-tyrosine phosphatase family.</text>
</comment>
<name>TP4AB_DICDI</name>
<accession>Q86IL4</accession>
<accession>Q558S1</accession>
<protein>
    <recommendedName>
        <fullName>Probable protein tyrosine phosphatase type IVA B</fullName>
        <ecNumber>3.1.3.48</ecNumber>
    </recommendedName>
</protein>
<organism>
    <name type="scientific">Dictyostelium discoideum</name>
    <name type="common">Social amoeba</name>
    <dbReference type="NCBI Taxonomy" id="44689"/>
    <lineage>
        <taxon>Eukaryota</taxon>
        <taxon>Amoebozoa</taxon>
        <taxon>Evosea</taxon>
        <taxon>Eumycetozoa</taxon>
        <taxon>Dictyostelia</taxon>
        <taxon>Dictyosteliales</taxon>
        <taxon>Dictyosteliaceae</taxon>
        <taxon>Dictyostelium</taxon>
    </lineage>
</organism>
<feature type="chain" id="PRO_0000329026" description="Probable protein tyrosine phosphatase type IVA B">
    <location>
        <begin position="1"/>
        <end position="160"/>
    </location>
</feature>
<feature type="propeptide" id="PRO_0000396657" description="Removed in mature form" evidence="1">
    <location>
        <begin position="161"/>
        <end position="163"/>
    </location>
</feature>
<feature type="domain" description="Tyrosine-protein phosphatase" evidence="2">
    <location>
        <begin position="10"/>
        <end position="161"/>
    </location>
</feature>
<feature type="active site" description="Proton donor" evidence="1">
    <location>
        <position position="70"/>
    </location>
</feature>
<feature type="active site" description="Phosphocysteine intermediate" evidence="2">
    <location>
        <position position="104"/>
    </location>
</feature>
<feature type="binding site" evidence="1">
    <location>
        <begin position="105"/>
        <end position="110"/>
    </location>
    <ligand>
        <name>phosphate</name>
        <dbReference type="ChEBI" id="CHEBI:43474"/>
    </ligand>
</feature>
<feature type="binding site" evidence="1">
    <location>
        <position position="110"/>
    </location>
    <ligand>
        <name>substrate</name>
    </ligand>
</feature>
<feature type="modified residue" description="Cysteine methyl ester" evidence="1">
    <location>
        <position position="160"/>
    </location>
</feature>
<feature type="lipid moiety-binding region" description="S-farnesyl cysteine" evidence="1">
    <location>
        <position position="160"/>
    </location>
</feature>
<feature type="disulfide bond" evidence="1">
    <location>
        <begin position="49"/>
        <end position="104"/>
    </location>
</feature>
<keyword id="KW-1015">Disulfide bond</keyword>
<keyword id="KW-0378">Hydrolase</keyword>
<keyword id="KW-0449">Lipoprotein</keyword>
<keyword id="KW-0472">Membrane</keyword>
<keyword id="KW-0488">Methylation</keyword>
<keyword id="KW-0636">Prenylation</keyword>
<keyword id="KW-0904">Protein phosphatase</keyword>
<keyword id="KW-1185">Reference proteome</keyword>
<sequence length="163" mass="18542">MDPGRSHIETIIESSTHKFILFDEPTEETIPYFKDLMKKNSCINIVRCCEINYDASLFEGVKIHELCFKDGNVPPKDIIERWLEILKQAFIENGKQKTTVGIHCIAGLGRTPLLVCIALIEDGMKPLQAVEFVRSKRKNAINSPQIKFLKEYKASKKAGCKIM</sequence>